<organism>
    <name type="scientific">Trimeresurus albolabris</name>
    <name type="common">White-lipped pit viper</name>
    <name type="synonym">Cryptelytrops albolabris</name>
    <dbReference type="NCBI Taxonomy" id="8765"/>
    <lineage>
        <taxon>Eukaryota</taxon>
        <taxon>Metazoa</taxon>
        <taxon>Chordata</taxon>
        <taxon>Craniata</taxon>
        <taxon>Vertebrata</taxon>
        <taxon>Euteleostomi</taxon>
        <taxon>Lepidosauria</taxon>
        <taxon>Squamata</taxon>
        <taxon>Bifurcata</taxon>
        <taxon>Unidentata</taxon>
        <taxon>Episquamata</taxon>
        <taxon>Toxicofera</taxon>
        <taxon>Serpentes</taxon>
        <taxon>Colubroidea</taxon>
        <taxon>Viperidae</taxon>
        <taxon>Crotalinae</taxon>
        <taxon>Trimeresurus</taxon>
    </lineage>
</organism>
<dbReference type="EC" id="3.4.21.-"/>
<dbReference type="EMBL" id="EF690366">
    <property type="protein sequence ID" value="ABS12075.1"/>
    <property type="molecule type" value="mRNA"/>
</dbReference>
<dbReference type="SMR" id="A7LAC7"/>
<dbReference type="MEROPS" id="S01.181"/>
<dbReference type="GO" id="GO:0005576">
    <property type="term" value="C:extracellular region"/>
    <property type="evidence" value="ECO:0007669"/>
    <property type="project" value="UniProtKB-SubCell"/>
</dbReference>
<dbReference type="GO" id="GO:0030141">
    <property type="term" value="C:secretory granule"/>
    <property type="evidence" value="ECO:0007669"/>
    <property type="project" value="TreeGrafter"/>
</dbReference>
<dbReference type="GO" id="GO:0004252">
    <property type="term" value="F:serine-type endopeptidase activity"/>
    <property type="evidence" value="ECO:0007669"/>
    <property type="project" value="InterPro"/>
</dbReference>
<dbReference type="GO" id="GO:0090729">
    <property type="term" value="F:toxin activity"/>
    <property type="evidence" value="ECO:0007669"/>
    <property type="project" value="UniProtKB-KW"/>
</dbReference>
<dbReference type="GO" id="GO:0006508">
    <property type="term" value="P:proteolysis"/>
    <property type="evidence" value="ECO:0007669"/>
    <property type="project" value="UniProtKB-KW"/>
</dbReference>
<dbReference type="CDD" id="cd00190">
    <property type="entry name" value="Tryp_SPc"/>
    <property type="match status" value="1"/>
</dbReference>
<dbReference type="FunFam" id="2.40.10.10:FF:000158">
    <property type="entry name" value="Thrombin-like enzyme saxthrombin"/>
    <property type="match status" value="1"/>
</dbReference>
<dbReference type="Gene3D" id="2.40.10.10">
    <property type="entry name" value="Trypsin-like serine proteases"/>
    <property type="match status" value="2"/>
</dbReference>
<dbReference type="InterPro" id="IPR009003">
    <property type="entry name" value="Peptidase_S1_PA"/>
</dbReference>
<dbReference type="InterPro" id="IPR043504">
    <property type="entry name" value="Peptidase_S1_PA_chymotrypsin"/>
</dbReference>
<dbReference type="InterPro" id="IPR001314">
    <property type="entry name" value="Peptidase_S1A"/>
</dbReference>
<dbReference type="InterPro" id="IPR001254">
    <property type="entry name" value="Trypsin_dom"/>
</dbReference>
<dbReference type="InterPro" id="IPR018114">
    <property type="entry name" value="TRYPSIN_HIS"/>
</dbReference>
<dbReference type="PANTHER" id="PTHR24271:SF47">
    <property type="entry name" value="KALLIKREIN-1"/>
    <property type="match status" value="1"/>
</dbReference>
<dbReference type="PANTHER" id="PTHR24271">
    <property type="entry name" value="KALLIKREIN-RELATED"/>
    <property type="match status" value="1"/>
</dbReference>
<dbReference type="Pfam" id="PF00089">
    <property type="entry name" value="Trypsin"/>
    <property type="match status" value="1"/>
</dbReference>
<dbReference type="PRINTS" id="PR00722">
    <property type="entry name" value="CHYMOTRYPSIN"/>
</dbReference>
<dbReference type="SMART" id="SM00020">
    <property type="entry name" value="Tryp_SPc"/>
    <property type="match status" value="1"/>
</dbReference>
<dbReference type="SUPFAM" id="SSF50494">
    <property type="entry name" value="Trypsin-like serine proteases"/>
    <property type="match status" value="1"/>
</dbReference>
<dbReference type="PROSITE" id="PS50240">
    <property type="entry name" value="TRYPSIN_DOM"/>
    <property type="match status" value="1"/>
</dbReference>
<dbReference type="PROSITE" id="PS00134">
    <property type="entry name" value="TRYPSIN_HIS"/>
    <property type="match status" value="1"/>
</dbReference>
<evidence type="ECO:0000250" key="1"/>
<evidence type="ECO:0000250" key="2">
    <source>
        <dbReference type="UniProtKB" id="Q9I8X1"/>
    </source>
</evidence>
<evidence type="ECO:0000255" key="3"/>
<evidence type="ECO:0000255" key="4">
    <source>
        <dbReference type="PROSITE-ProRule" id="PRU00274"/>
    </source>
</evidence>
<feature type="signal peptide" evidence="3">
    <location>
        <begin position="1"/>
        <end position="18"/>
    </location>
</feature>
<feature type="propeptide" id="PRO_0000416388" evidence="1">
    <location>
        <begin position="19"/>
        <end position="24"/>
    </location>
</feature>
<feature type="chain" id="PRO_0000416389" description="Thrombin-like enzyme 2">
    <location>
        <begin position="25"/>
        <end position="260"/>
    </location>
</feature>
<feature type="domain" description="Peptidase S1" evidence="4">
    <location>
        <begin position="25"/>
        <end position="251"/>
    </location>
</feature>
<feature type="active site" description="Charge relay system" evidence="2">
    <location>
        <position position="67"/>
    </location>
</feature>
<feature type="active site" description="Charge relay system" evidence="2">
    <location>
        <position position="112"/>
    </location>
</feature>
<feature type="active site" description="Charge relay system" evidence="2">
    <location>
        <position position="206"/>
    </location>
</feature>
<feature type="glycosylation site" description="N-linked (GlcNAc...) asparagine" evidence="3">
    <location>
        <position position="105"/>
    </location>
</feature>
<feature type="glycosylation site" description="N-linked (GlcNAc...) asparagine" evidence="3">
    <location>
        <position position="156"/>
    </location>
</feature>
<feature type="glycosylation site" description="N-linked (GlcNAc...) asparagine" evidence="3">
    <location>
        <position position="172"/>
    </location>
</feature>
<feature type="glycosylation site" description="N-linked (GlcNAc...) asparagine" evidence="3">
    <location>
        <position position="253"/>
    </location>
</feature>
<feature type="disulfide bond" evidence="4">
    <location>
        <begin position="31"/>
        <end position="165"/>
    </location>
</feature>
<feature type="disulfide bond" evidence="4">
    <location>
        <begin position="52"/>
        <end position="68"/>
    </location>
</feature>
<feature type="disulfide bond" evidence="4">
    <location>
        <begin position="102"/>
        <end position="258"/>
    </location>
</feature>
<feature type="disulfide bond" evidence="4">
    <location>
        <begin position="144"/>
        <end position="212"/>
    </location>
</feature>
<feature type="disulfide bond" evidence="4">
    <location>
        <begin position="176"/>
        <end position="191"/>
    </location>
</feature>
<feature type="disulfide bond" evidence="4">
    <location>
        <begin position="202"/>
        <end position="227"/>
    </location>
</feature>
<proteinExistence type="evidence at transcript level"/>
<keyword id="KW-1204">Blood coagulation cascade activating toxin</keyword>
<keyword id="KW-1015">Disulfide bond</keyword>
<keyword id="KW-0325">Glycoprotein</keyword>
<keyword id="KW-1199">Hemostasis impairing toxin</keyword>
<keyword id="KW-0378">Hydrolase</keyword>
<keyword id="KW-0645">Protease</keyword>
<keyword id="KW-0964">Secreted</keyword>
<keyword id="KW-0720">Serine protease</keyword>
<keyword id="KW-0732">Signal</keyword>
<keyword id="KW-0800">Toxin</keyword>
<keyword id="KW-0865">Zymogen</keyword>
<name>VSP2_TRIAB</name>
<accession>A7LAC7</accession>
<protein>
    <recommendedName>
        <fullName>Thrombin-like enzyme 2</fullName>
        <shortName>SVTLE</shortName>
        <ecNumber>3.4.21.-</ecNumber>
    </recommendedName>
    <alternativeName>
        <fullName>Fibrinogen-clotting enzyme</fullName>
    </alternativeName>
    <alternativeName>
        <fullName>Green pit viper thrombin-like enzyme 2</fullName>
        <shortName>GPV-TL2</shortName>
    </alternativeName>
    <alternativeName>
        <fullName>Snake venom serine protease</fullName>
        <shortName>SVSP</shortName>
    </alternativeName>
</protein>
<sequence>MMLIRVLANLLILQLSYAQKSSELVIGGDECNINEHRFLVALYDVWSGDFLCGGTLINKEYVLTAAHCETRNMYIYLGMHNKMYQFDDEQRRYPKKKYFFRCSNNFTRWDKDIMLIRLNRPVRNSEHIAPLSLPSSPPSVGSVCRVMGWGTITSPNETLPDVPRCANINLLNYTVCRGVFPRLPARSRTLCAGVLQGGIDTCKRDSGGPLICNGKLQGVVFWGPKPCAQPRKPALYTKVFDHLDWIQSIIAGNTTVTCPP</sequence>
<comment type="function">
    <text evidence="1">Thrombin-like snake venom serine protease.</text>
</comment>
<comment type="subunit">
    <text evidence="1">Monomer.</text>
</comment>
<comment type="subcellular location">
    <subcellularLocation>
        <location evidence="1">Secreted</location>
    </subcellularLocation>
</comment>
<comment type="tissue specificity">
    <text>Expressed by the venom gland.</text>
</comment>
<comment type="similarity">
    <text evidence="4">Belongs to the peptidase S1 family. Snake venom subfamily.</text>
</comment>
<reference key="1">
    <citation type="journal article" date="2006" name="Toxicon">
        <title>Molecular cloning of novel serine proteases and phospholipases A2 from green pit viper (Trimeresurus albolabris) venom gland cDNA library.</title>
        <authorList>
            <person name="Rojnuckarin P."/>
            <person name="Muanpasitporn C."/>
            <person name="Chanhome L."/>
            <person name="Arpijuntarangkoon J."/>
            <person name="Intragumtornchai T."/>
        </authorList>
    </citation>
    <scope>NUCLEOTIDE SEQUENCE [MRNA]</scope>
</reference>